<evidence type="ECO:0000250" key="1"/>
<evidence type="ECO:0000255" key="2">
    <source>
        <dbReference type="PROSITE-ProRule" id="PRU01282"/>
    </source>
</evidence>
<evidence type="ECO:0000305" key="3"/>
<organism>
    <name type="scientific">Escherichia coli (strain K12)</name>
    <dbReference type="NCBI Taxonomy" id="83333"/>
    <lineage>
        <taxon>Bacteria</taxon>
        <taxon>Pseudomonadati</taxon>
        <taxon>Pseudomonadota</taxon>
        <taxon>Gammaproteobacteria</taxon>
        <taxon>Enterobacterales</taxon>
        <taxon>Enterobacteriaceae</taxon>
        <taxon>Escherichia</taxon>
    </lineage>
</organism>
<name>ARSCL_ECOLI</name>
<proteinExistence type="inferred from homology"/>
<dbReference type="EC" id="1.20.4.1"/>
<dbReference type="EMBL" id="U36840">
    <property type="protein sequence ID" value="AAA79806.1"/>
    <property type="molecule type" value="Genomic_DNA"/>
</dbReference>
<dbReference type="EMBL" id="AP009048">
    <property type="protein sequence ID" value="BAA16506.2"/>
    <property type="molecule type" value="Genomic_DNA"/>
</dbReference>
<dbReference type="PIR" id="T08649">
    <property type="entry name" value="T08649"/>
</dbReference>
<dbReference type="SMR" id="P0CF87"/>
<dbReference type="BioGRID" id="4260630">
    <property type="interactions" value="13"/>
</dbReference>
<dbReference type="KEGG" id="ecj:JW2619"/>
<dbReference type="KEGG" id="ecoc:C3026_14590"/>
<dbReference type="OrthoDB" id="6637472at2"/>
<dbReference type="PRO" id="PR:P0CF87"/>
<dbReference type="GO" id="GO:0008794">
    <property type="term" value="F:arsenate reductase (glutaredoxin) activity"/>
    <property type="evidence" value="ECO:0007669"/>
    <property type="project" value="UniProtKB-EC"/>
</dbReference>
<dbReference type="GO" id="GO:0046685">
    <property type="term" value="P:response to arsenic-containing substance"/>
    <property type="evidence" value="ECO:0007669"/>
    <property type="project" value="UniProtKB-KW"/>
</dbReference>
<dbReference type="Gene3D" id="3.40.30.10">
    <property type="entry name" value="Glutaredoxin"/>
    <property type="match status" value="1"/>
</dbReference>
<dbReference type="InterPro" id="IPR006660">
    <property type="entry name" value="Arsenate_reductase-like"/>
</dbReference>
<dbReference type="InterPro" id="IPR036249">
    <property type="entry name" value="Thioredoxin-like_sf"/>
</dbReference>
<dbReference type="PANTHER" id="PTHR30041">
    <property type="entry name" value="ARSENATE REDUCTASE"/>
    <property type="match status" value="1"/>
</dbReference>
<dbReference type="PANTHER" id="PTHR30041:SF5">
    <property type="entry name" value="ARSENATE REDUCTASE-RELATED"/>
    <property type="match status" value="1"/>
</dbReference>
<dbReference type="SUPFAM" id="SSF52833">
    <property type="entry name" value="Thioredoxin-like"/>
    <property type="match status" value="1"/>
</dbReference>
<dbReference type="PROSITE" id="PS51353">
    <property type="entry name" value="ARSC"/>
    <property type="match status" value="1"/>
</dbReference>
<accession>P0CF87</accession>
<accession>P52136</accession>
<accession>P76606</accession>
<accession>P77012</accession>
<feature type="chain" id="PRO_0000394134" description="Putative arsenate reductase">
    <location>
        <begin position="1"/>
        <end position="104"/>
    </location>
</feature>
<feature type="active site" evidence="2">
    <location>
        <position position="12"/>
    </location>
</feature>
<protein>
    <recommendedName>
        <fullName>Putative arsenate reductase</fullName>
        <ecNumber>1.20.4.1</ecNumber>
    </recommendedName>
    <alternativeName>
        <fullName>Arsenical pump modifier</fullName>
    </alternativeName>
</protein>
<reference key="1">
    <citation type="journal article" date="1997" name="DNA Res.">
        <title>Construction of a contiguous 874-kb sequence of the Escherichia coli-K12 genome corresponding to 50.0-68.8 min on the linkage map and analysis of its sequence features.</title>
        <authorList>
            <person name="Yamamoto Y."/>
            <person name="Aiba H."/>
            <person name="Baba T."/>
            <person name="Hayashi K."/>
            <person name="Inada T."/>
            <person name="Isono K."/>
            <person name="Itoh T."/>
            <person name="Kimura S."/>
            <person name="Kitagawa M."/>
            <person name="Makino K."/>
            <person name="Miki T."/>
            <person name="Mitsuhashi N."/>
            <person name="Mizobuchi K."/>
            <person name="Mori H."/>
            <person name="Nakade S."/>
            <person name="Nakamura Y."/>
            <person name="Nashimoto H."/>
            <person name="Oshima T."/>
            <person name="Oyama S."/>
            <person name="Saito N."/>
            <person name="Sampei G."/>
            <person name="Satoh Y."/>
            <person name="Sivasundaram S."/>
            <person name="Tagami H."/>
            <person name="Takahashi H."/>
            <person name="Takeda J."/>
            <person name="Takemoto K."/>
            <person name="Uehara K."/>
            <person name="Wada C."/>
            <person name="Yamagata S."/>
            <person name="Horiuchi T."/>
        </authorList>
    </citation>
    <scope>NUCLEOTIDE SEQUENCE [LARGE SCALE GENOMIC DNA]</scope>
    <source>
        <strain>K12 / W3110 / ATCC 27325 / DSM 5911</strain>
    </source>
</reference>
<reference key="2">
    <citation type="journal article" date="2006" name="Mol. Syst. Biol.">
        <title>Highly accurate genome sequences of Escherichia coli K-12 strains MG1655 and W3110.</title>
        <authorList>
            <person name="Hayashi K."/>
            <person name="Morooka N."/>
            <person name="Yamamoto Y."/>
            <person name="Fujita K."/>
            <person name="Isono K."/>
            <person name="Choi S."/>
            <person name="Ohtsubo E."/>
            <person name="Baba T."/>
            <person name="Wanner B.L."/>
            <person name="Mori H."/>
            <person name="Horiuchi T."/>
        </authorList>
    </citation>
    <scope>NUCLEOTIDE SEQUENCE [LARGE SCALE GENOMIC DNA]</scope>
    <source>
        <strain>K12 / W3110 / ATCC 27325 / DSM 5911</strain>
    </source>
</reference>
<keyword id="KW-0059">Arsenical resistance</keyword>
<keyword id="KW-0560">Oxidoreductase</keyword>
<comment type="function">
    <text evidence="1">Reduction of arsenate [As(V)] to arsenite [As(III)]. This protein expands the substrate specificity of ArsAB pump which can extrude arsenite and antimonite to allow for arsenate pumping and resistance (By similarity).</text>
</comment>
<comment type="catalytic activity">
    <reaction>
        <text>[glutaredoxin]-dithiol + arsenate + glutathione + H(+) = glutathionyl-S-S-[glutaredoxin] + arsenite + H2O</text>
        <dbReference type="Rhea" id="RHEA:22016"/>
        <dbReference type="Rhea" id="RHEA-COMP:10729"/>
        <dbReference type="Rhea" id="RHEA-COMP:17668"/>
        <dbReference type="ChEBI" id="CHEBI:15377"/>
        <dbReference type="ChEBI" id="CHEBI:15378"/>
        <dbReference type="ChEBI" id="CHEBI:29242"/>
        <dbReference type="ChEBI" id="CHEBI:29950"/>
        <dbReference type="ChEBI" id="CHEBI:48597"/>
        <dbReference type="ChEBI" id="CHEBI:57925"/>
        <dbReference type="ChEBI" id="CHEBI:146199"/>
        <dbReference type="EC" id="1.20.4.1"/>
    </reaction>
</comment>
<comment type="miscellaneous">
    <text evidence="3">Is missing about 40 C-terminal residues compared to paralogs.</text>
</comment>
<comment type="similarity">
    <text evidence="3">Belongs to the ArsC family.</text>
</comment>
<sequence length="104" mass="11824">MSNITIYHNPACGTSRNTLEMLHNNGNEPTIINYLDMPPTRDELIKLISDIFSDKIIECIREQCHLMPALSLNVIGHVDIRSIHSYLFNFNEKVSPSHGFIKNG</sequence>
<gene>
    <name type="primary">yfjU</name>
    <name type="ordered locus">JW2619</name>
</gene>